<evidence type="ECO:0000255" key="1">
    <source>
        <dbReference type="HAMAP-Rule" id="MF_00519"/>
    </source>
</evidence>
<sequence>MTIFDNYEVWFVIGSQHLYGPETLRQVTQHAEHVVNALNTEAKLPCKLVLKPLGTTPDEITAICRDANYDDRCAGLVVWLHTFSPAKMWINGLTMLNKPLLQFHTQFNAALPWDSIDMDFMNLNQTAHGGREFGFIGARMRQQHAVVTGHWQDKQAHERIGSWMRQAVSKQDTRHLKVCRFGDNMREVAVTDGDKVAAQIKFGFSVNTWAVGDLVQVVNSISDGDVNALVDEYESCYTMTPATQIHGEKRQNVLEAARIELGMKRFLEQGGFHAFTTTFEDLHGLKQLPGLAVQRLMQQGYGFAGEGDWKTAALLRIMKVMSTGLQGGTSFMEDYTYHFEKGNDLVLGSHMLEVCPSIAVEEKPILDVQHLGIGGKDDPARLIFNTQTGPAIVASLIDLGDRYRLLVNCIDTVKTPHSLPKLPVANALWKAQPDLPTASEAWILAGGAHHTVFSHALNLNDMRQFAEMHDIEITVIDNDTRLPAFKDALRWNEVYYGFRR</sequence>
<proteinExistence type="inferred from homology"/>
<feature type="chain" id="PRO_1000081676" description="L-arabinose isomerase">
    <location>
        <begin position="1"/>
        <end position="500"/>
    </location>
</feature>
<feature type="binding site" evidence="1">
    <location>
        <position position="306"/>
    </location>
    <ligand>
        <name>Mn(2+)</name>
        <dbReference type="ChEBI" id="CHEBI:29035"/>
    </ligand>
</feature>
<feature type="binding site" evidence="1">
    <location>
        <position position="333"/>
    </location>
    <ligand>
        <name>Mn(2+)</name>
        <dbReference type="ChEBI" id="CHEBI:29035"/>
    </ligand>
</feature>
<feature type="binding site" evidence="1">
    <location>
        <position position="350"/>
    </location>
    <ligand>
        <name>Mn(2+)</name>
        <dbReference type="ChEBI" id="CHEBI:29035"/>
    </ligand>
</feature>
<feature type="binding site" evidence="1">
    <location>
        <position position="450"/>
    </location>
    <ligand>
        <name>Mn(2+)</name>
        <dbReference type="ChEBI" id="CHEBI:29035"/>
    </ligand>
</feature>
<name>ARAA_ECOLC</name>
<gene>
    <name evidence="1" type="primary">araA</name>
    <name type="ordered locus">EcolC_3595</name>
</gene>
<protein>
    <recommendedName>
        <fullName evidence="1">L-arabinose isomerase</fullName>
        <ecNumber evidence="1">5.3.1.4</ecNumber>
    </recommendedName>
</protein>
<organism>
    <name type="scientific">Escherichia coli (strain ATCC 8739 / DSM 1576 / NBRC 3972 / NCIMB 8545 / WDCM 00012 / Crooks)</name>
    <dbReference type="NCBI Taxonomy" id="481805"/>
    <lineage>
        <taxon>Bacteria</taxon>
        <taxon>Pseudomonadati</taxon>
        <taxon>Pseudomonadota</taxon>
        <taxon>Gammaproteobacteria</taxon>
        <taxon>Enterobacterales</taxon>
        <taxon>Enterobacteriaceae</taxon>
        <taxon>Escherichia</taxon>
    </lineage>
</organism>
<reference key="1">
    <citation type="submission" date="2008-02" db="EMBL/GenBank/DDBJ databases">
        <title>Complete sequence of Escherichia coli C str. ATCC 8739.</title>
        <authorList>
            <person name="Copeland A."/>
            <person name="Lucas S."/>
            <person name="Lapidus A."/>
            <person name="Glavina del Rio T."/>
            <person name="Dalin E."/>
            <person name="Tice H."/>
            <person name="Bruce D."/>
            <person name="Goodwin L."/>
            <person name="Pitluck S."/>
            <person name="Kiss H."/>
            <person name="Brettin T."/>
            <person name="Detter J.C."/>
            <person name="Han C."/>
            <person name="Kuske C.R."/>
            <person name="Schmutz J."/>
            <person name="Larimer F."/>
            <person name="Land M."/>
            <person name="Hauser L."/>
            <person name="Kyrpides N."/>
            <person name="Mikhailova N."/>
            <person name="Ingram L."/>
            <person name="Richardson P."/>
        </authorList>
    </citation>
    <scope>NUCLEOTIDE SEQUENCE [LARGE SCALE GENOMIC DNA]</scope>
    <source>
        <strain>ATCC 8739 / DSM 1576 / NBRC 3972 / NCIMB 8545 / WDCM 00012 / Crooks</strain>
    </source>
</reference>
<accession>B1IRB6</accession>
<comment type="function">
    <text evidence="1">Catalyzes the conversion of L-arabinose to L-ribulose.</text>
</comment>
<comment type="catalytic activity">
    <reaction evidence="1">
        <text>beta-L-arabinopyranose = L-ribulose</text>
        <dbReference type="Rhea" id="RHEA:14821"/>
        <dbReference type="ChEBI" id="CHEBI:16880"/>
        <dbReference type="ChEBI" id="CHEBI:40886"/>
        <dbReference type="EC" id="5.3.1.4"/>
    </reaction>
</comment>
<comment type="cofactor">
    <cofactor evidence="1">
        <name>Mn(2+)</name>
        <dbReference type="ChEBI" id="CHEBI:29035"/>
    </cofactor>
    <text evidence="1">Binds 1 Mn(2+) ion per subunit.</text>
</comment>
<comment type="pathway">
    <text evidence="1">Carbohydrate degradation; L-arabinose degradation via L-ribulose; D-xylulose 5-phosphate from L-arabinose (bacterial route): step 1/3.</text>
</comment>
<comment type="subunit">
    <text evidence="1">Homohexamer.</text>
</comment>
<comment type="similarity">
    <text evidence="1">Belongs to the arabinose isomerase family.</text>
</comment>
<keyword id="KW-0054">Arabinose catabolism</keyword>
<keyword id="KW-0119">Carbohydrate metabolism</keyword>
<keyword id="KW-0413">Isomerase</keyword>
<keyword id="KW-0464">Manganese</keyword>
<keyword id="KW-0479">Metal-binding</keyword>
<dbReference type="EC" id="5.3.1.4" evidence="1"/>
<dbReference type="EMBL" id="CP000946">
    <property type="protein sequence ID" value="ACA79209.1"/>
    <property type="molecule type" value="Genomic_DNA"/>
</dbReference>
<dbReference type="RefSeq" id="WP_000151734.1">
    <property type="nucleotide sequence ID" value="NZ_MTFT01000035.1"/>
</dbReference>
<dbReference type="SMR" id="B1IRB6"/>
<dbReference type="GeneID" id="93777375"/>
<dbReference type="KEGG" id="ecl:EcolC_3595"/>
<dbReference type="HOGENOM" id="CLU_045663_0_0_6"/>
<dbReference type="UniPathway" id="UPA00145">
    <property type="reaction ID" value="UER00565"/>
</dbReference>
<dbReference type="GO" id="GO:0005829">
    <property type="term" value="C:cytosol"/>
    <property type="evidence" value="ECO:0007669"/>
    <property type="project" value="TreeGrafter"/>
</dbReference>
<dbReference type="GO" id="GO:0008733">
    <property type="term" value="F:L-arabinose isomerase activity"/>
    <property type="evidence" value="ECO:0007669"/>
    <property type="project" value="UniProtKB-UniRule"/>
</dbReference>
<dbReference type="GO" id="GO:0030145">
    <property type="term" value="F:manganese ion binding"/>
    <property type="evidence" value="ECO:0007669"/>
    <property type="project" value="UniProtKB-UniRule"/>
</dbReference>
<dbReference type="GO" id="GO:0019569">
    <property type="term" value="P:L-arabinose catabolic process to xylulose 5-phosphate"/>
    <property type="evidence" value="ECO:0007669"/>
    <property type="project" value="UniProtKB-UniRule"/>
</dbReference>
<dbReference type="CDD" id="cd03557">
    <property type="entry name" value="L-arabinose_isomerase"/>
    <property type="match status" value="1"/>
</dbReference>
<dbReference type="FunFam" id="3.40.50.10940:FF:000001">
    <property type="entry name" value="L-arabinose isomerase"/>
    <property type="match status" value="1"/>
</dbReference>
<dbReference type="Gene3D" id="3.40.50.10940">
    <property type="match status" value="1"/>
</dbReference>
<dbReference type="HAMAP" id="MF_00519">
    <property type="entry name" value="Arabinose_Isome"/>
    <property type="match status" value="1"/>
</dbReference>
<dbReference type="InterPro" id="IPR024664">
    <property type="entry name" value="Ara_Isoase_C"/>
</dbReference>
<dbReference type="InterPro" id="IPR055390">
    <property type="entry name" value="AraA_central"/>
</dbReference>
<dbReference type="InterPro" id="IPR055389">
    <property type="entry name" value="AraA_N"/>
</dbReference>
<dbReference type="InterPro" id="IPR038583">
    <property type="entry name" value="AraA_N_sf"/>
</dbReference>
<dbReference type="InterPro" id="IPR004216">
    <property type="entry name" value="Fuc/Ara_isomerase_C"/>
</dbReference>
<dbReference type="InterPro" id="IPR009015">
    <property type="entry name" value="Fucose_isomerase_N/cen_sf"/>
</dbReference>
<dbReference type="InterPro" id="IPR003762">
    <property type="entry name" value="Lara_isomerase"/>
</dbReference>
<dbReference type="NCBIfam" id="NF002795">
    <property type="entry name" value="PRK02929.1"/>
    <property type="match status" value="1"/>
</dbReference>
<dbReference type="PANTHER" id="PTHR38464">
    <property type="entry name" value="L-ARABINOSE ISOMERASE"/>
    <property type="match status" value="1"/>
</dbReference>
<dbReference type="PANTHER" id="PTHR38464:SF1">
    <property type="entry name" value="L-ARABINOSE ISOMERASE"/>
    <property type="match status" value="1"/>
</dbReference>
<dbReference type="Pfam" id="PF24856">
    <property type="entry name" value="AraA_central"/>
    <property type="match status" value="1"/>
</dbReference>
<dbReference type="Pfam" id="PF02610">
    <property type="entry name" value="AraA_N"/>
    <property type="match status" value="1"/>
</dbReference>
<dbReference type="Pfam" id="PF11762">
    <property type="entry name" value="Arabinose_Iso_C"/>
    <property type="match status" value="1"/>
</dbReference>
<dbReference type="PIRSF" id="PIRSF001478">
    <property type="entry name" value="L-ara_isomerase"/>
    <property type="match status" value="1"/>
</dbReference>
<dbReference type="SUPFAM" id="SSF50443">
    <property type="entry name" value="FucI/AraA C-terminal domain-like"/>
    <property type="match status" value="1"/>
</dbReference>
<dbReference type="SUPFAM" id="SSF53743">
    <property type="entry name" value="FucI/AraA N-terminal and middle domains"/>
    <property type="match status" value="1"/>
</dbReference>